<accession>P80643</accession>
<accession>P51832</accession>
<keyword id="KW-0002">3D-structure</keyword>
<keyword id="KW-0963">Cytoplasm</keyword>
<keyword id="KW-0903">Direct protein sequencing</keyword>
<keyword id="KW-0275">Fatty acid biosynthesis</keyword>
<keyword id="KW-0276">Fatty acid metabolism</keyword>
<keyword id="KW-0444">Lipid biosynthesis</keyword>
<keyword id="KW-0443">Lipid metabolism</keyword>
<keyword id="KW-0596">Phosphopantetheine</keyword>
<keyword id="KW-0597">Phosphoprotein</keyword>
<keyword id="KW-1185">Reference proteome</keyword>
<proteinExistence type="evidence at protein level"/>
<evidence type="ECO:0000255" key="1">
    <source>
        <dbReference type="HAMAP-Rule" id="MF_01217"/>
    </source>
</evidence>
<evidence type="ECO:0000255" key="2">
    <source>
        <dbReference type="PROSITE-ProRule" id="PRU00258"/>
    </source>
</evidence>
<evidence type="ECO:0000269" key="3">
    <source>
    </source>
</evidence>
<evidence type="ECO:0007829" key="4">
    <source>
        <dbReference type="PDB" id="1F80"/>
    </source>
</evidence>
<evidence type="ECO:0007829" key="5">
    <source>
        <dbReference type="PDB" id="1HY8"/>
    </source>
</evidence>
<evidence type="ECO:0007829" key="6">
    <source>
        <dbReference type="PDB" id="2X2B"/>
    </source>
</evidence>
<reference key="1">
    <citation type="journal article" date="1996" name="J. Bacteriol.">
        <title>Bacillus subtilis acyl carrier protein is encoded in a cluster of lipid biosynthesis genes.</title>
        <authorList>
            <person name="Morbidoni H.R."/>
            <person name="de Mendoza D."/>
            <person name="Cronan J.E. Jr."/>
        </authorList>
    </citation>
    <scope>PROTEIN SEQUENCE OF 15-77</scope>
    <scope>NUCLEOTIDE SEQUENCE [GENOMIC DNA] OF 1-14</scope>
    <scope>PHOSPHOPANTETHEINYLATION AT SER-37</scope>
    <source>
        <strain>168</strain>
    </source>
</reference>
<reference key="2">
    <citation type="journal article" date="1996" name="Gene">
        <title>The effect of Srb, a homologue of the mammalian SRP receptor alpha-subunit, on Bacillus subtilis growth and protein translocation.</title>
        <authorList>
            <person name="Oguro A."/>
            <person name="Kakeshita H."/>
            <person name="Takamatsu H."/>
            <person name="Nakamura K."/>
            <person name="Yamane K."/>
        </authorList>
    </citation>
    <scope>NUCLEOTIDE SEQUENCE [GENOMIC DNA]</scope>
    <source>
        <strain>168</strain>
    </source>
</reference>
<reference key="3">
    <citation type="journal article" date="1997" name="Nature">
        <title>The complete genome sequence of the Gram-positive bacterium Bacillus subtilis.</title>
        <authorList>
            <person name="Kunst F."/>
            <person name="Ogasawara N."/>
            <person name="Moszer I."/>
            <person name="Albertini A.M."/>
            <person name="Alloni G."/>
            <person name="Azevedo V."/>
            <person name="Bertero M.G."/>
            <person name="Bessieres P."/>
            <person name="Bolotin A."/>
            <person name="Borchert S."/>
            <person name="Borriss R."/>
            <person name="Boursier L."/>
            <person name="Brans A."/>
            <person name="Braun M."/>
            <person name="Brignell S.C."/>
            <person name="Bron S."/>
            <person name="Brouillet S."/>
            <person name="Bruschi C.V."/>
            <person name="Caldwell B."/>
            <person name="Capuano V."/>
            <person name="Carter N.M."/>
            <person name="Choi S.-K."/>
            <person name="Codani J.-J."/>
            <person name="Connerton I.F."/>
            <person name="Cummings N.J."/>
            <person name="Daniel R.A."/>
            <person name="Denizot F."/>
            <person name="Devine K.M."/>
            <person name="Duesterhoeft A."/>
            <person name="Ehrlich S.D."/>
            <person name="Emmerson P.T."/>
            <person name="Entian K.-D."/>
            <person name="Errington J."/>
            <person name="Fabret C."/>
            <person name="Ferrari E."/>
            <person name="Foulger D."/>
            <person name="Fritz C."/>
            <person name="Fujita M."/>
            <person name="Fujita Y."/>
            <person name="Fuma S."/>
            <person name="Galizzi A."/>
            <person name="Galleron N."/>
            <person name="Ghim S.-Y."/>
            <person name="Glaser P."/>
            <person name="Goffeau A."/>
            <person name="Golightly E.J."/>
            <person name="Grandi G."/>
            <person name="Guiseppi G."/>
            <person name="Guy B.J."/>
            <person name="Haga K."/>
            <person name="Haiech J."/>
            <person name="Harwood C.R."/>
            <person name="Henaut A."/>
            <person name="Hilbert H."/>
            <person name="Holsappel S."/>
            <person name="Hosono S."/>
            <person name="Hullo M.-F."/>
            <person name="Itaya M."/>
            <person name="Jones L.-M."/>
            <person name="Joris B."/>
            <person name="Karamata D."/>
            <person name="Kasahara Y."/>
            <person name="Klaerr-Blanchard M."/>
            <person name="Klein C."/>
            <person name="Kobayashi Y."/>
            <person name="Koetter P."/>
            <person name="Koningstein G."/>
            <person name="Krogh S."/>
            <person name="Kumano M."/>
            <person name="Kurita K."/>
            <person name="Lapidus A."/>
            <person name="Lardinois S."/>
            <person name="Lauber J."/>
            <person name="Lazarevic V."/>
            <person name="Lee S.-M."/>
            <person name="Levine A."/>
            <person name="Liu H."/>
            <person name="Masuda S."/>
            <person name="Mauel C."/>
            <person name="Medigue C."/>
            <person name="Medina N."/>
            <person name="Mellado R.P."/>
            <person name="Mizuno M."/>
            <person name="Moestl D."/>
            <person name="Nakai S."/>
            <person name="Noback M."/>
            <person name="Noone D."/>
            <person name="O'Reilly M."/>
            <person name="Ogawa K."/>
            <person name="Ogiwara A."/>
            <person name="Oudega B."/>
            <person name="Park S.-H."/>
            <person name="Parro V."/>
            <person name="Pohl T.M."/>
            <person name="Portetelle D."/>
            <person name="Porwollik S."/>
            <person name="Prescott A.M."/>
            <person name="Presecan E."/>
            <person name="Pujic P."/>
            <person name="Purnelle B."/>
            <person name="Rapoport G."/>
            <person name="Rey M."/>
            <person name="Reynolds S."/>
            <person name="Rieger M."/>
            <person name="Rivolta C."/>
            <person name="Rocha E."/>
            <person name="Roche B."/>
            <person name="Rose M."/>
            <person name="Sadaie Y."/>
            <person name="Sato T."/>
            <person name="Scanlan E."/>
            <person name="Schleich S."/>
            <person name="Schroeter R."/>
            <person name="Scoffone F."/>
            <person name="Sekiguchi J."/>
            <person name="Sekowska A."/>
            <person name="Seror S.J."/>
            <person name="Serror P."/>
            <person name="Shin B.-S."/>
            <person name="Soldo B."/>
            <person name="Sorokin A."/>
            <person name="Tacconi E."/>
            <person name="Takagi T."/>
            <person name="Takahashi H."/>
            <person name="Takemaru K."/>
            <person name="Takeuchi M."/>
            <person name="Tamakoshi A."/>
            <person name="Tanaka T."/>
            <person name="Terpstra P."/>
            <person name="Tognoni A."/>
            <person name="Tosato V."/>
            <person name="Uchiyama S."/>
            <person name="Vandenbol M."/>
            <person name="Vannier F."/>
            <person name="Vassarotti A."/>
            <person name="Viari A."/>
            <person name="Wambutt R."/>
            <person name="Wedler E."/>
            <person name="Wedler H."/>
            <person name="Weitzenegger T."/>
            <person name="Winters P."/>
            <person name="Wipat A."/>
            <person name="Yamamoto H."/>
            <person name="Yamane K."/>
            <person name="Yasumoto K."/>
            <person name="Yata K."/>
            <person name="Yoshida K."/>
            <person name="Yoshikawa H.-F."/>
            <person name="Zumstein E."/>
            <person name="Yoshikawa H."/>
            <person name="Danchin A."/>
        </authorList>
    </citation>
    <scope>NUCLEOTIDE SEQUENCE [LARGE SCALE GENOMIC DNA]</scope>
    <source>
        <strain>168</strain>
    </source>
</reference>
<reference key="4">
    <citation type="journal article" date="1994" name="J. Bacteriol.">
        <title>Role of the D-alanyl carrier protein in the biosynthesis of D-alanyl-lipoteichoic acid.</title>
        <authorList>
            <person name="Heaton M.P."/>
            <person name="Neuhaus F.C."/>
        </authorList>
    </citation>
    <scope>PROTEIN SEQUENCE OF 1-17</scope>
</reference>
<reference key="5">
    <citation type="journal article" date="2000" name="Structure">
        <title>Crystal structures of substrate binding to Bacillus subtilis holo-(acyl carrier protein) synthase reveal a novel trimeric arrangement of molecules resulting in three active sites.</title>
        <authorList>
            <person name="Parris K.D."/>
            <person name="Lin L."/>
            <person name="Tam A."/>
            <person name="Mathew R."/>
            <person name="Hixon J."/>
            <person name="Stahl M."/>
            <person name="Fritz C.C."/>
            <person name="Seehra J."/>
            <person name="Somers W.S."/>
        </authorList>
    </citation>
    <scope>X-RAY CRYSTALLOGRAPHY (2.3 ANGSTROMS) OF HOLO-(ACYL-CARRIER-PROTEIN) IN COMPLEX WITH HOLO-(ACYL-CARRIER-PROTEIN) SYNTHASE</scope>
</reference>
<reference key="6">
    <citation type="journal article" date="2001" name="Structure">
        <title>Solution structure of B. subtilis acyl carrier protein.</title>
        <authorList>
            <person name="Xu G.Y."/>
            <person name="Tam A."/>
            <person name="Lin L."/>
            <person name="Hixon J."/>
            <person name="Fritz C.C."/>
            <person name="Powers R."/>
        </authorList>
    </citation>
    <scope>STRUCTURE BY NMR</scope>
</reference>
<feature type="chain" id="PRO_0000180104" description="Acyl carrier protein">
    <location>
        <begin position="1"/>
        <end position="77"/>
    </location>
</feature>
<feature type="domain" description="Carrier" evidence="2">
    <location>
        <begin position="2"/>
        <end position="77"/>
    </location>
</feature>
<feature type="modified residue" description="O-(pantetheine 4'-phosphoryl)serine" evidence="2 3">
    <location>
        <position position="37"/>
    </location>
</feature>
<feature type="helix" evidence="4">
    <location>
        <begin position="3"/>
        <end position="15"/>
    </location>
</feature>
<feature type="helix" evidence="6">
    <location>
        <begin position="20"/>
        <end position="22"/>
    </location>
</feature>
<feature type="strand" evidence="5">
    <location>
        <begin position="25"/>
        <end position="27"/>
    </location>
</feature>
<feature type="helix" evidence="4">
    <location>
        <begin position="29"/>
        <end position="32"/>
    </location>
</feature>
<feature type="helix" evidence="4">
    <location>
        <begin position="39"/>
        <end position="50"/>
    </location>
</feature>
<feature type="helix" evidence="4">
    <location>
        <begin position="57"/>
        <end position="62"/>
    </location>
</feature>
<feature type="helix" evidence="4">
    <location>
        <begin position="66"/>
        <end position="72"/>
    </location>
</feature>
<dbReference type="EMBL" id="U59433">
    <property type="protein sequence ID" value="AAC44308.1"/>
    <property type="molecule type" value="Genomic_DNA"/>
</dbReference>
<dbReference type="EMBL" id="D64116">
    <property type="protein sequence ID" value="BAA10975.1"/>
    <property type="molecule type" value="Genomic_DNA"/>
</dbReference>
<dbReference type="EMBL" id="AL009126">
    <property type="protein sequence ID" value="CAB13465.1"/>
    <property type="molecule type" value="Genomic_DNA"/>
</dbReference>
<dbReference type="PIR" id="JC4822">
    <property type="entry name" value="JC4822"/>
</dbReference>
<dbReference type="PIR" id="T46634">
    <property type="entry name" value="T46634"/>
</dbReference>
<dbReference type="RefSeq" id="NP_389474.1">
    <property type="nucleotide sequence ID" value="NC_000964.3"/>
</dbReference>
<dbReference type="RefSeq" id="WP_003154310.1">
    <property type="nucleotide sequence ID" value="NZ_OZ025638.1"/>
</dbReference>
<dbReference type="PDB" id="1F80">
    <property type="method" value="X-ray"/>
    <property type="resolution" value="2.30 A"/>
    <property type="chains" value="D/E/F=2-77"/>
</dbReference>
<dbReference type="PDB" id="1HY8">
    <property type="method" value="NMR"/>
    <property type="chains" value="A=2-77"/>
</dbReference>
<dbReference type="PDB" id="2X2B">
    <property type="method" value="X-ray"/>
    <property type="resolution" value="2.69 A"/>
    <property type="chains" value="A=1-77"/>
</dbReference>
<dbReference type="PDBsum" id="1F80"/>
<dbReference type="PDBsum" id="1HY8"/>
<dbReference type="PDBsum" id="2X2B"/>
<dbReference type="BMRB" id="P80643"/>
<dbReference type="SMR" id="P80643"/>
<dbReference type="FunCoup" id="P80643">
    <property type="interactions" value="408"/>
</dbReference>
<dbReference type="IntAct" id="P80643">
    <property type="interactions" value="2"/>
</dbReference>
<dbReference type="STRING" id="224308.BSU15920"/>
<dbReference type="jPOST" id="P80643"/>
<dbReference type="PaxDb" id="224308-BSU15920"/>
<dbReference type="EnsemblBacteria" id="CAB13465">
    <property type="protein sequence ID" value="CAB13465"/>
    <property type="gene ID" value="BSU_15920"/>
</dbReference>
<dbReference type="GeneID" id="93080708"/>
<dbReference type="GeneID" id="938486"/>
<dbReference type="KEGG" id="bsu:BSU15920"/>
<dbReference type="PATRIC" id="fig|224308.179.peg.1732"/>
<dbReference type="eggNOG" id="COG0236">
    <property type="taxonomic scope" value="Bacteria"/>
</dbReference>
<dbReference type="InParanoid" id="P80643"/>
<dbReference type="OrthoDB" id="9804551at2"/>
<dbReference type="PhylomeDB" id="P80643"/>
<dbReference type="BioCyc" id="BSUB:BSU15920-MONOMER"/>
<dbReference type="UniPathway" id="UPA00094"/>
<dbReference type="EvolutionaryTrace" id="P80643"/>
<dbReference type="PRO" id="PR:P80643"/>
<dbReference type="Proteomes" id="UP000001570">
    <property type="component" value="Chromosome"/>
</dbReference>
<dbReference type="GO" id="GO:0005829">
    <property type="term" value="C:cytosol"/>
    <property type="evidence" value="ECO:0000318"/>
    <property type="project" value="GO_Central"/>
</dbReference>
<dbReference type="GO" id="GO:0016020">
    <property type="term" value="C:membrane"/>
    <property type="evidence" value="ECO:0007669"/>
    <property type="project" value="GOC"/>
</dbReference>
<dbReference type="GO" id="GO:0000035">
    <property type="term" value="F:acyl binding"/>
    <property type="evidence" value="ECO:0000318"/>
    <property type="project" value="GO_Central"/>
</dbReference>
<dbReference type="GO" id="GO:0000036">
    <property type="term" value="F:acyl carrier activity"/>
    <property type="evidence" value="ECO:0000318"/>
    <property type="project" value="GO_Central"/>
</dbReference>
<dbReference type="GO" id="GO:0009245">
    <property type="term" value="P:lipid A biosynthetic process"/>
    <property type="evidence" value="ECO:0000318"/>
    <property type="project" value="GO_Central"/>
</dbReference>
<dbReference type="FunFam" id="1.10.1200.10:FF:000001">
    <property type="entry name" value="Acyl carrier protein"/>
    <property type="match status" value="1"/>
</dbReference>
<dbReference type="Gene3D" id="1.10.1200.10">
    <property type="entry name" value="ACP-like"/>
    <property type="match status" value="1"/>
</dbReference>
<dbReference type="HAMAP" id="MF_01217">
    <property type="entry name" value="Acyl_carrier"/>
    <property type="match status" value="1"/>
</dbReference>
<dbReference type="InterPro" id="IPR003231">
    <property type="entry name" value="ACP"/>
</dbReference>
<dbReference type="InterPro" id="IPR036736">
    <property type="entry name" value="ACP-like_sf"/>
</dbReference>
<dbReference type="InterPro" id="IPR009081">
    <property type="entry name" value="PP-bd_ACP"/>
</dbReference>
<dbReference type="InterPro" id="IPR006162">
    <property type="entry name" value="Ppantetheine_attach_site"/>
</dbReference>
<dbReference type="NCBIfam" id="TIGR00517">
    <property type="entry name" value="acyl_carrier"/>
    <property type="match status" value="1"/>
</dbReference>
<dbReference type="NCBIfam" id="NF002148">
    <property type="entry name" value="PRK00982.1-2"/>
    <property type="match status" value="1"/>
</dbReference>
<dbReference type="NCBIfam" id="NF002149">
    <property type="entry name" value="PRK00982.1-3"/>
    <property type="match status" value="1"/>
</dbReference>
<dbReference type="NCBIfam" id="NF002150">
    <property type="entry name" value="PRK00982.1-4"/>
    <property type="match status" value="1"/>
</dbReference>
<dbReference type="NCBIfam" id="NF002151">
    <property type="entry name" value="PRK00982.1-5"/>
    <property type="match status" value="1"/>
</dbReference>
<dbReference type="PANTHER" id="PTHR20863">
    <property type="entry name" value="ACYL CARRIER PROTEIN"/>
    <property type="match status" value="1"/>
</dbReference>
<dbReference type="PANTHER" id="PTHR20863:SF76">
    <property type="entry name" value="CARRIER DOMAIN-CONTAINING PROTEIN"/>
    <property type="match status" value="1"/>
</dbReference>
<dbReference type="Pfam" id="PF00550">
    <property type="entry name" value="PP-binding"/>
    <property type="match status" value="1"/>
</dbReference>
<dbReference type="SUPFAM" id="SSF47336">
    <property type="entry name" value="ACP-like"/>
    <property type="match status" value="1"/>
</dbReference>
<dbReference type="PROSITE" id="PS50075">
    <property type="entry name" value="CARRIER"/>
    <property type="match status" value="1"/>
</dbReference>
<dbReference type="PROSITE" id="PS00012">
    <property type="entry name" value="PHOSPHOPANTETHEINE"/>
    <property type="match status" value="1"/>
</dbReference>
<name>ACP_BACSU</name>
<comment type="function">
    <text>Carrier of the growing fatty acid chain in fatty acid biosynthesis.</text>
</comment>
<comment type="pathway">
    <text evidence="1">Lipid metabolism; fatty acid biosynthesis.</text>
</comment>
<comment type="subcellular location">
    <subcellularLocation>
        <location evidence="1">Cytoplasm</location>
    </subcellularLocation>
</comment>
<comment type="PTM">
    <text>4'-phosphopantetheine is transferred from CoA to a specific serine of apo-ACP by AcpS. This modification is essential for activity because fatty acids are bound in thioester linkage to the sulfhydryl of the prosthetic group.</text>
</comment>
<comment type="similarity">
    <text evidence="1">Belongs to the acyl carrier protein (ACP) family.</text>
</comment>
<organism>
    <name type="scientific">Bacillus subtilis (strain 168)</name>
    <dbReference type="NCBI Taxonomy" id="224308"/>
    <lineage>
        <taxon>Bacteria</taxon>
        <taxon>Bacillati</taxon>
        <taxon>Bacillota</taxon>
        <taxon>Bacilli</taxon>
        <taxon>Bacillales</taxon>
        <taxon>Bacillaceae</taxon>
        <taxon>Bacillus</taxon>
    </lineage>
</organism>
<gene>
    <name type="primary">acpA</name>
    <name type="synonym">acpP</name>
    <name type="ordered locus">BSU15920</name>
</gene>
<protein>
    <recommendedName>
        <fullName evidence="1">Acyl carrier protein</fullName>
        <shortName evidence="1">ACP</shortName>
    </recommendedName>
</protein>
<sequence>MADTLERVTKIIVDRLGVDEADVKLEASFKEDLGADSLDVVELVMELEDEFDMEISDEDAEKIATVGDAVNYIQNQQ</sequence>